<protein>
    <recommendedName>
        <fullName evidence="26">Alpha-actinin-4</fullName>
    </recommendedName>
    <alternativeName>
        <fullName evidence="23">Non-muscle alpha-actinin 4</fullName>
    </alternativeName>
</protein>
<evidence type="ECO:0000250" key="1">
    <source>
        <dbReference type="UniProtKB" id="P12814"/>
    </source>
</evidence>
<evidence type="ECO:0000250" key="2">
    <source>
        <dbReference type="UniProtKB" id="P57780"/>
    </source>
</evidence>
<evidence type="ECO:0000250" key="3">
    <source>
        <dbReference type="UniProtKB" id="Q9QXQ0"/>
    </source>
</evidence>
<evidence type="ECO:0000250" key="4">
    <source>
        <dbReference type="UniProtKB" id="Q9Z1P2"/>
    </source>
</evidence>
<evidence type="ECO:0000255" key="5"/>
<evidence type="ECO:0000255" key="6">
    <source>
        <dbReference type="PROSITE-ProRule" id="PRU00044"/>
    </source>
</evidence>
<evidence type="ECO:0000255" key="7">
    <source>
        <dbReference type="PROSITE-ProRule" id="PRU00448"/>
    </source>
</evidence>
<evidence type="ECO:0000269" key="8">
    <source>
    </source>
</evidence>
<evidence type="ECO:0000269" key="9">
    <source>
    </source>
</evidence>
<evidence type="ECO:0000269" key="10">
    <source>
    </source>
</evidence>
<evidence type="ECO:0000269" key="11">
    <source>
    </source>
</evidence>
<evidence type="ECO:0000269" key="12">
    <source>
    </source>
</evidence>
<evidence type="ECO:0000269" key="13">
    <source>
    </source>
</evidence>
<evidence type="ECO:0000269" key="14">
    <source>
    </source>
</evidence>
<evidence type="ECO:0000269" key="15">
    <source>
    </source>
</evidence>
<evidence type="ECO:0000269" key="16">
    <source>
    </source>
</evidence>
<evidence type="ECO:0000269" key="17">
    <source>
    </source>
</evidence>
<evidence type="ECO:0000269" key="18">
    <source>
    </source>
</evidence>
<evidence type="ECO:0000269" key="19">
    <source>
    </source>
</evidence>
<evidence type="ECO:0000269" key="20">
    <source>
    </source>
</evidence>
<evidence type="ECO:0000269" key="21">
    <source>
    </source>
</evidence>
<evidence type="ECO:0000269" key="22">
    <source>
    </source>
</evidence>
<evidence type="ECO:0000303" key="23">
    <source>
    </source>
</evidence>
<evidence type="ECO:0000303" key="24">
    <source>
    </source>
</evidence>
<evidence type="ECO:0000303" key="25">
    <source ref="3"/>
</evidence>
<evidence type="ECO:0000305" key="26"/>
<evidence type="ECO:0000305" key="27">
    <source>
    </source>
</evidence>
<evidence type="ECO:0000312" key="28">
    <source>
        <dbReference type="HGNC" id="HGNC:166"/>
    </source>
</evidence>
<evidence type="ECO:0007744" key="29">
    <source>
        <dbReference type="PDB" id="1YDI"/>
    </source>
</evidence>
<evidence type="ECO:0007744" key="30">
    <source>
    </source>
</evidence>
<evidence type="ECO:0007744" key="31">
    <source>
    </source>
</evidence>
<evidence type="ECO:0007829" key="32">
    <source>
        <dbReference type="PDB" id="1WLX"/>
    </source>
</evidence>
<evidence type="ECO:0007829" key="33">
    <source>
        <dbReference type="PDB" id="1YDI"/>
    </source>
</evidence>
<evidence type="ECO:0007829" key="34">
    <source>
        <dbReference type="PDB" id="6O31"/>
    </source>
</evidence>
<evidence type="ECO:0007829" key="35">
    <source>
        <dbReference type="PDB" id="6OA6"/>
    </source>
</evidence>
<accession>O43707</accession>
<accession>A4K467</accession>
<accession>D6PXK4</accession>
<accession>O76048</accession>
<reference key="1">
    <citation type="journal article" date="2000" name="Oncogene">
        <title>The human non-muscle alpha-actinin protein encoded by the ACTN4 gene suppresses tumorigenicity of human neuroblastoma cells.</title>
        <authorList>
            <person name="Nikolopoulos S.N."/>
            <person name="Spengler B.A."/>
            <person name="Kisselbach K."/>
            <person name="Evans A.E."/>
            <person name="Biedler J.L."/>
            <person name="Ross R.A."/>
        </authorList>
    </citation>
    <scope>NUCLEOTIDE SEQUENCE [MRNA] (ISOFORM 1)</scope>
    <source>
        <tissue>Neuroblastoma</tissue>
    </source>
</reference>
<reference key="2">
    <citation type="journal article" date="2012" name="Tsitologiia">
        <title>Novel splicing isoform of actin-binding protein alpha-actinin 4 in epidermoid carcinoma cells A431.</title>
        <authorList>
            <person name="Aksenova V.I.U."/>
            <person name="Khotin M.G."/>
            <person name="Turoverova L.V."/>
            <person name="Iudintseva N.M."/>
            <person name="Magnusson K.E."/>
            <person name="Pinaev G.P."/>
            <person name="Tentler D.G."/>
        </authorList>
    </citation>
    <scope>NUCLEOTIDE SEQUENCE [MRNA] (ISOFORM ACTN4ISO)</scope>
    <scope>SUBCELLULAR LOCATION</scope>
    <scope>ALTERNATIVE SPLICING</scope>
</reference>
<reference key="3">
    <citation type="submission" date="2006-03" db="EMBL/GenBank/DDBJ databases">
        <title>Actinin alpha4, an actin binding protein, is a transcriptional coactivator that antagonizes class II HDAC activity.</title>
        <authorList>
            <person name="Chakraborty S."/>
            <person name="Cheng X."/>
            <person name="Lam M."/>
            <person name="Reineke E.L."/>
            <person name="Li X."/>
            <person name="Liu Y."/>
            <person name="Gao C."/>
            <person name="Khurana S."/>
            <person name="Kao H.-Y."/>
        </authorList>
    </citation>
    <scope>NUCLEOTIDE SEQUENCE [MRNA] (ISOFORM 3)</scope>
</reference>
<reference key="4">
    <citation type="journal article" date="2004" name="Nature">
        <title>The DNA sequence and biology of human chromosome 19.</title>
        <authorList>
            <person name="Grimwood J."/>
            <person name="Gordon L.A."/>
            <person name="Olsen A.S."/>
            <person name="Terry A."/>
            <person name="Schmutz J."/>
            <person name="Lamerdin J.E."/>
            <person name="Hellsten U."/>
            <person name="Goodstein D."/>
            <person name="Couronne O."/>
            <person name="Tran-Gyamfi M."/>
            <person name="Aerts A."/>
            <person name="Altherr M."/>
            <person name="Ashworth L."/>
            <person name="Bajorek E."/>
            <person name="Black S."/>
            <person name="Branscomb E."/>
            <person name="Caenepeel S."/>
            <person name="Carrano A.V."/>
            <person name="Caoile C."/>
            <person name="Chan Y.M."/>
            <person name="Christensen M."/>
            <person name="Cleland C.A."/>
            <person name="Copeland A."/>
            <person name="Dalin E."/>
            <person name="Dehal P."/>
            <person name="Denys M."/>
            <person name="Detter J.C."/>
            <person name="Escobar J."/>
            <person name="Flowers D."/>
            <person name="Fotopulos D."/>
            <person name="Garcia C."/>
            <person name="Georgescu A.M."/>
            <person name="Glavina T."/>
            <person name="Gomez M."/>
            <person name="Gonzales E."/>
            <person name="Groza M."/>
            <person name="Hammon N."/>
            <person name="Hawkins T."/>
            <person name="Haydu L."/>
            <person name="Ho I."/>
            <person name="Huang W."/>
            <person name="Israni S."/>
            <person name="Jett J."/>
            <person name="Kadner K."/>
            <person name="Kimball H."/>
            <person name="Kobayashi A."/>
            <person name="Larionov V."/>
            <person name="Leem S.-H."/>
            <person name="Lopez F."/>
            <person name="Lou Y."/>
            <person name="Lowry S."/>
            <person name="Malfatti S."/>
            <person name="Martinez D."/>
            <person name="McCready P.M."/>
            <person name="Medina C."/>
            <person name="Morgan J."/>
            <person name="Nelson K."/>
            <person name="Nolan M."/>
            <person name="Ovcharenko I."/>
            <person name="Pitluck S."/>
            <person name="Pollard M."/>
            <person name="Popkie A.P."/>
            <person name="Predki P."/>
            <person name="Quan G."/>
            <person name="Ramirez L."/>
            <person name="Rash S."/>
            <person name="Retterer J."/>
            <person name="Rodriguez A."/>
            <person name="Rogers S."/>
            <person name="Salamov A."/>
            <person name="Salazar A."/>
            <person name="She X."/>
            <person name="Smith D."/>
            <person name="Slezak T."/>
            <person name="Solovyev V."/>
            <person name="Thayer N."/>
            <person name="Tice H."/>
            <person name="Tsai M."/>
            <person name="Ustaszewska A."/>
            <person name="Vo N."/>
            <person name="Wagner M."/>
            <person name="Wheeler J."/>
            <person name="Wu K."/>
            <person name="Xie G."/>
            <person name="Yang J."/>
            <person name="Dubchak I."/>
            <person name="Furey T.S."/>
            <person name="DeJong P."/>
            <person name="Dickson M."/>
            <person name="Gordon D."/>
            <person name="Eichler E.E."/>
            <person name="Pennacchio L.A."/>
            <person name="Richardson P."/>
            <person name="Stubbs L."/>
            <person name="Rokhsar D.S."/>
            <person name="Myers R.M."/>
            <person name="Rubin E.M."/>
            <person name="Lucas S.M."/>
        </authorList>
    </citation>
    <scope>NUCLEOTIDE SEQUENCE [LARGE SCALE GENOMIC DNA]</scope>
</reference>
<reference key="5">
    <citation type="journal article" date="2004" name="Genome Res.">
        <title>The status, quality, and expansion of the NIH full-length cDNA project: the Mammalian Gene Collection (MGC).</title>
        <authorList>
            <consortium name="The MGC Project Team"/>
        </authorList>
    </citation>
    <scope>NUCLEOTIDE SEQUENCE [LARGE SCALE MRNA] (ISOFORM 1)</scope>
    <source>
        <tissue>Placenta</tissue>
    </source>
</reference>
<reference key="6">
    <citation type="journal article" date="2007" name="BMC Genomics">
        <title>The full-ORF clone resource of the German cDNA consortium.</title>
        <authorList>
            <person name="Bechtel S."/>
            <person name="Rosenfelder H."/>
            <person name="Duda A."/>
            <person name="Schmidt C.P."/>
            <person name="Ernst U."/>
            <person name="Wellenreuther R."/>
            <person name="Mehrle A."/>
            <person name="Schuster C."/>
            <person name="Bahr A."/>
            <person name="Bloecker H."/>
            <person name="Heubner D."/>
            <person name="Hoerlein A."/>
            <person name="Michel G."/>
            <person name="Wedler H."/>
            <person name="Koehrer K."/>
            <person name="Ottenwaelder B."/>
            <person name="Poustka A."/>
            <person name="Wiemann S."/>
            <person name="Schupp I."/>
        </authorList>
    </citation>
    <scope>NUCLEOTIDE SEQUENCE [LARGE SCALE MRNA] OF 1-170 (ISOFORM 1)</scope>
    <source>
        <tissue>Uterus</tissue>
    </source>
</reference>
<reference key="7">
    <citation type="journal article" date="2006" name="Genome Res.">
        <title>Diversification of transcriptional modulation: large-scale identification and characterization of putative alternative promoters of human genes.</title>
        <authorList>
            <person name="Kimura K."/>
            <person name="Wakamatsu A."/>
            <person name="Suzuki Y."/>
            <person name="Ota T."/>
            <person name="Nishikawa T."/>
            <person name="Yamashita R."/>
            <person name="Yamamoto J."/>
            <person name="Sekine M."/>
            <person name="Tsuritani K."/>
            <person name="Wakaguri H."/>
            <person name="Ishii S."/>
            <person name="Sugiyama T."/>
            <person name="Saito K."/>
            <person name="Isono Y."/>
            <person name="Irie R."/>
            <person name="Kushida N."/>
            <person name="Yoneyama T."/>
            <person name="Otsuka R."/>
            <person name="Kanda K."/>
            <person name="Yokoi T."/>
            <person name="Kondo H."/>
            <person name="Wagatsuma M."/>
            <person name="Murakawa K."/>
            <person name="Ishida S."/>
            <person name="Ishibashi T."/>
            <person name="Takahashi-Fujii A."/>
            <person name="Tanase T."/>
            <person name="Nagai K."/>
            <person name="Kikuchi H."/>
            <person name="Nakai K."/>
            <person name="Isogai T."/>
            <person name="Sugano S."/>
        </authorList>
    </citation>
    <scope>NUCLEOTIDE SEQUENCE [LARGE SCALE MRNA] OF 1-224 (ISOFORM 1)</scope>
</reference>
<reference key="8">
    <citation type="journal article" date="1998" name="J. Cell Biol.">
        <title>Actinin-4, a novel actin-bundling protein associated with cell motility and cancer invasion.</title>
        <authorList>
            <person name="Honda K."/>
            <person name="Yamada T."/>
            <person name="Endo R."/>
            <person name="Ino Y."/>
            <person name="Gotoh M."/>
            <person name="Tsuda H."/>
            <person name="Yamada Y."/>
            <person name="Chiba H."/>
            <person name="Hirohashi S."/>
        </authorList>
    </citation>
    <scope>NUCLEOTIDE SEQUENCE [MRNA] OF 4-911 (ISOFORM 1)</scope>
    <scope>FUNCTION</scope>
    <scope>SUBCELLULAR LOCATION</scope>
    <scope>TISSUE SPECIFICITY</scope>
</reference>
<reference key="9">
    <citation type="journal article" date="1998" name="J. Cell Biol.">
        <authorList>
            <person name="Honda K."/>
            <person name="Yamada T."/>
            <person name="Endo R."/>
            <person name="Ino Y."/>
            <person name="Gotoh M."/>
            <person name="Tsuda H."/>
            <person name="Yamada Y."/>
            <person name="Chiba H."/>
            <person name="Hirohashi S."/>
        </authorList>
    </citation>
    <scope>ERRATUM OF PUBMED:9508771</scope>
</reference>
<reference key="10">
    <citation type="journal article" date="2002" name="J. Biol. Chem.">
        <title>Interaction of two actin-binding proteins, synaptopodin and alpha-actinin-4, with the tight junction protein MAGI-1.</title>
        <authorList>
            <person name="Patrie K.M."/>
            <person name="Drescher A.J."/>
            <person name="Welihinda A."/>
            <person name="Mundel P."/>
            <person name="Margolis B."/>
        </authorList>
    </citation>
    <scope>INTERACTION WITH MAGI1</scope>
</reference>
<reference key="11">
    <citation type="journal article" date="2005" name="Mol. Biol. Cell">
        <title>CART: an Hrs/actinin-4/BERP/myosin V protein complex required for efficient receptor recycling.</title>
        <authorList>
            <person name="Yan Q."/>
            <person name="Sun W."/>
            <person name="Kujala P."/>
            <person name="Lotfi Y."/>
            <person name="Vida T.A."/>
            <person name="Bean A.J."/>
        </authorList>
    </citation>
    <scope>FUNCTION</scope>
    <scope>IDENTIFICATION IN THE CART COMPLEX</scope>
</reference>
<reference key="12">
    <citation type="journal article" date="2007" name="Mol. Cell. Proteomics">
        <title>Molecular composition of IMP1 ribonucleoprotein granules.</title>
        <authorList>
            <person name="Joeson L."/>
            <person name="Vikesaa J."/>
            <person name="Krogh A."/>
            <person name="Nielsen L.K."/>
            <person name="Hansen T."/>
            <person name="Borup R."/>
            <person name="Johnsen A.H."/>
            <person name="Christiansen J."/>
            <person name="Nielsen F.C."/>
        </authorList>
    </citation>
    <scope>IDENTIFICATION IN A MRNP GRANULE COMPLEX</scope>
    <scope>IDENTIFICATION BY MASS SPECTROMETRY</scope>
    <scope>SUBCELLULAR LOCATION</scope>
</reference>
<reference key="13">
    <citation type="journal article" date="2009" name="Science">
        <title>Lysine acetylation targets protein complexes and co-regulates major cellular functions.</title>
        <authorList>
            <person name="Choudhary C."/>
            <person name="Kumar C."/>
            <person name="Gnad F."/>
            <person name="Nielsen M.L."/>
            <person name="Rehman M."/>
            <person name="Walther T.C."/>
            <person name="Olsen J.V."/>
            <person name="Mann M."/>
        </authorList>
    </citation>
    <scope>ACETYLATION [LARGE SCALE ANALYSIS] AT LYS-114; LYS-592 AND LYS-625</scope>
    <scope>IDENTIFICATION BY MASS SPECTROMETRY [LARGE SCALE ANALYSIS]</scope>
</reference>
<reference key="14">
    <citation type="journal article" date="2011" name="BMC Syst. Biol.">
        <title>Initial characterization of the human central proteome.</title>
        <authorList>
            <person name="Burkard T.R."/>
            <person name="Planyavsky M."/>
            <person name="Kaupe I."/>
            <person name="Breitwieser F.P."/>
            <person name="Buerckstuemmer T."/>
            <person name="Bennett K.L."/>
            <person name="Superti-Furga G."/>
            <person name="Colinge J."/>
        </authorList>
    </citation>
    <scope>IDENTIFICATION BY MASS SPECTROMETRY [LARGE SCALE ANALYSIS]</scope>
</reference>
<reference key="15">
    <citation type="journal article" date="2012" name="J. Immunol.">
        <title>EWI-2 association with alpha-actinin regulates T cell immune synapses and HIV viral infection.</title>
        <authorList>
            <person name="Gordon-Alonso M."/>
            <person name="Sala-Valdes M."/>
            <person name="Rocha-Perugini V."/>
            <person name="Perez-Hernandez D."/>
            <person name="Lopez-Martin S."/>
            <person name="Ursa A."/>
            <person name="Alvarez S."/>
            <person name="Kolesnikova T.V."/>
            <person name="Vazquez J."/>
            <person name="Sanchez-Madrid F."/>
            <person name="Yanez-Mo M."/>
        </authorList>
    </citation>
    <scope>FUNCTION</scope>
    <scope>INTERACTION WITH IGSF8</scope>
</reference>
<reference key="16">
    <citation type="journal article" date="2014" name="J. Proteomics">
        <title>An enzyme assisted RP-RPLC approach for in-depth analysis of human liver phosphoproteome.</title>
        <authorList>
            <person name="Bian Y."/>
            <person name="Song C."/>
            <person name="Cheng K."/>
            <person name="Dong M."/>
            <person name="Wang F."/>
            <person name="Huang J."/>
            <person name="Sun D."/>
            <person name="Wang L."/>
            <person name="Ye M."/>
            <person name="Zou H."/>
        </authorList>
    </citation>
    <scope>PHOSPHORYLATION [LARGE SCALE ANALYSIS] AT THR-249</scope>
    <scope>IDENTIFICATION BY MASS SPECTROMETRY [LARGE SCALE ANALYSIS]</scope>
    <source>
        <tissue>Liver</tissue>
    </source>
</reference>
<reference key="17">
    <citation type="journal article" date="2015" name="Proteomics">
        <title>N-terminome analysis of the human mitochondrial proteome.</title>
        <authorList>
            <person name="Vaca Jacome A.S."/>
            <person name="Rabilloud T."/>
            <person name="Schaeffer-Reiss C."/>
            <person name="Rompais M."/>
            <person name="Ayoub D."/>
            <person name="Lane L."/>
            <person name="Bairoch A."/>
            <person name="Van Dorsselaer A."/>
            <person name="Carapito C."/>
        </authorList>
    </citation>
    <scope>IDENTIFICATION BY MASS SPECTROMETRY [LARGE SCALE ANALYSIS]</scope>
</reference>
<reference key="18">
    <citation type="journal article" date="2020" name="Biomedicines">
        <title>ACTN4 Mediates SEPT14 Mutation-Induced Sperm Head Defects.</title>
        <authorList>
            <person name="Lin Y.H."/>
            <person name="Huang C.Y."/>
            <person name="Ke C.C."/>
            <person name="Wang Y.Y."/>
            <person name="Lai T.H."/>
            <person name="Liu H.C."/>
            <person name="Ku W.C."/>
            <person name="Chan C.C."/>
            <person name="Lin Y.H."/>
        </authorList>
    </citation>
    <scope>INTERACTION WITH SEPTIN14</scope>
</reference>
<reference key="19">
    <citation type="submission" date="2004-06" db="PDB data bank">
        <title>Solution structure of the third spectrin repeat of alpha-actinin-4.</title>
        <authorList>
            <person name="Kowalski K."/>
            <person name="Merkel A.L."/>
            <person name="Booker G.W."/>
        </authorList>
    </citation>
    <scope>STRUCTURE BY NMR OF 519-645</scope>
</reference>
<reference key="20">
    <citation type="journal article" date="2005" name="Mol. Cell. Biol.">
        <title>Structural dynamics of alpha-actinin-vinculin interactions.</title>
        <authorList>
            <person name="Bois P.R.J."/>
            <person name="Borgon R.A."/>
            <person name="Vonrhein C."/>
            <person name="Izard T."/>
        </authorList>
    </citation>
    <scope>X-RAY CRYSTALLOGRAPHY (1.80 ANGSTROMS) OF 734-757 IN COMPLEX WITH VCL</scope>
    <scope>INTERACTION WITH VCL</scope>
</reference>
<reference key="21">
    <citation type="journal article" date="2008" name="J. Mol. Biol.">
        <title>Crystal structure of the actin-binding domain of alpha-actinin-4 Lys255Glu mutant implicated in focal segmental glomerulosclerosis.</title>
        <authorList>
            <person name="Lee S.H."/>
            <person name="Weins A."/>
            <person name="Hayes D.B."/>
            <person name="Pollak M.R."/>
            <person name="Dominguez R."/>
        </authorList>
    </citation>
    <scope>X-RAY CRYSTALLOGRAPHY (2.20 ANGSTROMS) OF 47-271</scope>
    <scope>CHARACTERIZATION OF VARIANTS FSGS1 GLU-255; ILE-259 AND PRO-262</scope>
</reference>
<reference key="22">
    <citation type="journal article" date="2012" name="J. Biol. Chem.">
        <title>Familial focal segmental glomerulosclerosis (FSGS)-linked alpha-actinin 4 (ACTN4) protein mutants lose ability to activate transcription by nuclear hormone receptors.</title>
        <authorList>
            <person name="Khurana S."/>
            <person name="Chakraborty S."/>
            <person name="Lam M."/>
            <person name="Liu Y."/>
            <person name="Su Y.T."/>
            <person name="Zhao X."/>
            <person name="Saleem M.A."/>
            <person name="Mathieson P.W."/>
            <person name="Bruggeman L.A."/>
            <person name="Kao H.Y."/>
        </authorList>
    </citation>
    <scope>CHARACTERIZATION OF VARIANTS FSGS1 GLU-255; ILE-259 AND PRO-262</scope>
    <scope>FUNCTION</scope>
    <scope>INTERACTION WITH PPARG AND RARA</scope>
    <scope>MUTAGENESIS OF 87-LEU-LEU-88</scope>
    <scope>DOMAIN</scope>
    <scope>SUBCELLULAR LOCATION</scope>
</reference>
<reference key="23">
    <citation type="journal article" date="2000" name="Nat. Genet.">
        <title>Mutations in ACTN4, encoding alpha-actinin-4, cause familial focal segmental glomerulosclerosis.</title>
        <authorList>
            <person name="Kaplan J.M."/>
            <person name="Kim S.H."/>
            <person name="North K.N."/>
            <person name="Rennke H."/>
            <person name="Correia L.A."/>
            <person name="Tong H.-Q."/>
            <person name="Mathis B.J."/>
            <person name="Rodriguez-Perez J.-C."/>
            <person name="Allen P.G."/>
            <person name="Beggs A.H."/>
            <person name="Pollak M.R."/>
        </authorList>
    </citation>
    <scope>VARIANTS FSGS1 GLU-255; ILE-259 AND PRO-262</scope>
    <source>
        <tissue>Lymphocyte</tissue>
    </source>
</reference>
<reference key="24">
    <citation type="journal article" date="2008" name="Am. J. Kidney Dis.">
        <title>Familial focal segmental glomerulosclerosis associated with an ACTN4 mutation and paternal germline mosaicism.</title>
        <authorList>
            <person name="Choi H.J."/>
            <person name="Lee B.H."/>
            <person name="Cho H.Y."/>
            <person name="Moon K.C."/>
            <person name="Ha I.S."/>
            <person name="Nagata M."/>
            <person name="Choi Y."/>
            <person name="Cheong H.I."/>
        </authorList>
    </citation>
    <scope>VARIANT FSGS1 PHE-262</scope>
</reference>
<reference key="25">
    <citation type="journal article" date="2012" name="Clin. Nephrol.">
        <title>Mutations in podocyte genes are a rare cause of primary FSGS associated with ESRD in adult patients.</title>
        <authorList>
            <person name="Buescher A.K."/>
            <person name="Konrad M."/>
            <person name="Nagel M."/>
            <person name="Witzke O."/>
            <person name="Kribben A."/>
            <person name="Hoyer P.F."/>
            <person name="Weber S."/>
        </authorList>
    </citation>
    <scope>VARIANT FSGS1 GLN-310</scope>
</reference>
<reference key="26">
    <citation type="journal article" date="2013" name="Folia Biol. (Praha)">
        <title>Mutational analysis of ACTN4, encoding alpha-actinin 4, in patients with focal segmental glomerulosclerosis using HRM method.</title>
        <authorList>
            <person name="Safarikova M."/>
            <person name="Reiterova J."/>
            <person name="Safrankova H."/>
            <person name="Stekrova J."/>
            <person name="Zidkova A."/>
            <person name="Obeidova L."/>
            <person name="Kohoutova M."/>
            <person name="Tesar V."/>
        </authorList>
    </citation>
    <scope>VARIANTS FSGS1 THR-427 AND ASP-748</scope>
    <scope>VARIANTS VAL-784; ARG-786; LEU-787; SER-787; TYR-793; ASP-798 AND MET-801</scope>
</reference>
<reference key="27">
    <citation type="journal article" date="2013" name="Kidney Int.">
        <title>Mutations in the INF2 gene account for a significant proportion of familial but not sporadic focal and segmental glomerulosclerosis.</title>
        <authorList>
            <person name="Barua M."/>
            <person name="Brown E.J."/>
            <person name="Charoonratana V.T."/>
            <person name="Genovese G."/>
            <person name="Sun H."/>
            <person name="Pollak M.R."/>
        </authorList>
    </citation>
    <scope>VARIANTS FSGS1 ARG-59; GLN-72; LEU-153; GLU-255; ILE-259 AND PRO-262</scope>
</reference>
<sequence>MVDYHAANQSYQYGPSSAGNGAGGGGSMGDYMAQEDDWDRDLLLDPAWEKQQRKTFTAWCNSHLRKAGTQIENIDEDFRDGLKLMLLLEVISGERLPKPERGKMRVHKINNVNKALDFIASKGVKLVSIGAEEIVDGNAKMTLGMIWTIILRFAIQDISVEETSAKEGLLLWCQRKTAPYKNVNVQNFHISWKDGLAFNALIHRHRPELIEYDKLRKDDPVTNLNNAFEVAEKYLDIPKMLDAEDIVNTARPDEKAIMTYVSSFYHAFSGAQKAETAANRICKVLAVNQENEHLMEDYEKLASDLLEWIRRTIPWLEDRVPQKTIQEMQQKLEDFRDYRRVHKPPKVQEKCQLEINFNTLQTKLRLSNRPAFMPSEGKMVSDINNGWQHLEQAEKGYEEWLLNEIRRLERLDHLAEKFRQKASIHEAWTDGKEAMLKHRDYETATLSDIKALIRKHEAFESDLAAHQDRVEQIAAIAQELNELDYYDSHNVNTRCQKICDQWDALGSLTHSRREALEKTEKQLEAIDQLHLEYAKRAAPFNNWMESAMEDLQDMFIVHTIEEIEGLISAHDQFKSTLPDADREREAILAIHKEAQRIAESNHIKLSGSNPYTTVTPQIINSKWEKVQQLVPKRDHALLEEQSKQQSNEHLRRQFASQANVVGPWIQTKMEEIGRISIEMNGTLEDQLSHLKQYERSIVDYKPNLDLLEQQHQLIQEALIFDNKHTNYTMEHIRVGWEQLLTTIARTINEVENQILTRDAKGISQEQMQEFRASFNHFDKDHGGALGPEEFKACLISLGYDVENDRQGEAEFNRIMSLVDPNHSGLVTFQAFIDFMSRETTDTDTADQVIASFKVLAGDKNFITAEELRRELPPDQAEYCIARMAPYQGPDAVPGALDYKSFSTALYGESDL</sequence>
<proteinExistence type="evidence at protein level"/>
<keyword id="KW-0002">3D-structure</keyword>
<keyword id="KW-0007">Acetylation</keyword>
<keyword id="KW-0009">Actin-binding</keyword>
<keyword id="KW-0025">Alternative splicing</keyword>
<keyword id="KW-0106">Calcium</keyword>
<keyword id="KW-0965">Cell junction</keyword>
<keyword id="KW-0963">Cytoplasm</keyword>
<keyword id="KW-0206">Cytoskeleton</keyword>
<keyword id="KW-0225">Disease variant</keyword>
<keyword id="KW-0479">Metal-binding</keyword>
<keyword id="KW-0539">Nucleus</keyword>
<keyword id="KW-0597">Phosphoprotein</keyword>
<keyword id="KW-0653">Protein transport</keyword>
<keyword id="KW-1267">Proteomics identification</keyword>
<keyword id="KW-1185">Reference proteome</keyword>
<keyword id="KW-0677">Repeat</keyword>
<keyword id="KW-0813">Transport</keyword>
<gene>
    <name evidence="28" type="primary">ACTN4</name>
</gene>
<dbReference type="EMBL" id="U48734">
    <property type="protein sequence ID" value="AAC17470.1"/>
    <property type="status" value="ALT_FRAME"/>
    <property type="molecule type" value="mRNA"/>
</dbReference>
<dbReference type="EMBL" id="GU987085">
    <property type="protein sequence ID" value="ADG03678.1"/>
    <property type="molecule type" value="mRNA"/>
</dbReference>
<dbReference type="EMBL" id="DQ431186">
    <property type="protein sequence ID" value="ABD96103.1"/>
    <property type="molecule type" value="mRNA"/>
</dbReference>
<dbReference type="EMBL" id="AC008649">
    <property type="status" value="NOT_ANNOTATED_CDS"/>
    <property type="molecule type" value="Genomic_DNA"/>
</dbReference>
<dbReference type="EMBL" id="AC022144">
    <property type="status" value="NOT_ANNOTATED_CDS"/>
    <property type="molecule type" value="Genomic_DNA"/>
</dbReference>
<dbReference type="EMBL" id="BC005033">
    <property type="protein sequence ID" value="AAH05033.1"/>
    <property type="molecule type" value="mRNA"/>
</dbReference>
<dbReference type="EMBL" id="AL047603">
    <property type="status" value="NOT_ANNOTATED_CDS"/>
    <property type="molecule type" value="mRNA"/>
</dbReference>
<dbReference type="EMBL" id="AU118403">
    <property type="status" value="NOT_ANNOTATED_CDS"/>
    <property type="molecule type" value="mRNA"/>
</dbReference>
<dbReference type="EMBL" id="D89980">
    <property type="protein sequence ID" value="BAA24447.1"/>
    <property type="status" value="ALT_INIT"/>
    <property type="molecule type" value="mRNA"/>
</dbReference>
<dbReference type="CCDS" id="CCDS12518.1">
    <molecule id="O43707-1"/>
</dbReference>
<dbReference type="RefSeq" id="NP_004915.2">
    <molecule id="O43707-1"/>
    <property type="nucleotide sequence ID" value="NM_004924.5"/>
</dbReference>
<dbReference type="PDB" id="1WLX">
    <property type="method" value="NMR"/>
    <property type="chains" value="A=519-645"/>
</dbReference>
<dbReference type="PDB" id="1YDI">
    <property type="method" value="X-ray"/>
    <property type="resolution" value="1.80 A"/>
    <property type="chains" value="B=734-757"/>
</dbReference>
<dbReference type="PDB" id="2R0O">
    <property type="method" value="X-ray"/>
    <property type="resolution" value="2.20 A"/>
    <property type="chains" value="A/B=47-271"/>
</dbReference>
<dbReference type="PDB" id="6O31">
    <property type="method" value="X-ray"/>
    <property type="resolution" value="1.51 A"/>
    <property type="chains" value="A=47-271"/>
</dbReference>
<dbReference type="PDB" id="6OA6">
    <property type="method" value="X-ray"/>
    <property type="resolution" value="1.37 A"/>
    <property type="chains" value="A=47-271"/>
</dbReference>
<dbReference type="PDBsum" id="1WLX"/>
<dbReference type="PDBsum" id="1YDI"/>
<dbReference type="PDBsum" id="2R0O"/>
<dbReference type="PDBsum" id="6O31"/>
<dbReference type="PDBsum" id="6OA6"/>
<dbReference type="BMRB" id="O43707"/>
<dbReference type="SMR" id="O43707"/>
<dbReference type="BioGRID" id="106596">
    <property type="interactions" value="411"/>
</dbReference>
<dbReference type="CORUM" id="O43707"/>
<dbReference type="DIP" id="DIP-33179N"/>
<dbReference type="FunCoup" id="O43707">
    <property type="interactions" value="1162"/>
</dbReference>
<dbReference type="IntAct" id="O43707">
    <property type="interactions" value="154"/>
</dbReference>
<dbReference type="MINT" id="O43707"/>
<dbReference type="STRING" id="9606.ENSP00000252699"/>
<dbReference type="CarbonylDB" id="O43707"/>
<dbReference type="GlyGen" id="O43707">
    <property type="glycosylation" value="3 sites, 1 N-linked glycan (1 site), 1 O-linked glycan (1 site)"/>
</dbReference>
<dbReference type="iPTMnet" id="O43707"/>
<dbReference type="MetOSite" id="O43707"/>
<dbReference type="PhosphoSitePlus" id="O43707"/>
<dbReference type="SwissPalm" id="O43707"/>
<dbReference type="BioMuta" id="ACTN4"/>
<dbReference type="REPRODUCTION-2DPAGE" id="O43707"/>
<dbReference type="CPTAC" id="CPTAC-7"/>
<dbReference type="CPTAC" id="CPTAC-8"/>
<dbReference type="jPOST" id="O43707"/>
<dbReference type="MassIVE" id="O43707"/>
<dbReference type="PaxDb" id="9606-ENSP00000252699"/>
<dbReference type="PeptideAtlas" id="O43707"/>
<dbReference type="PRIDE" id="O43707"/>
<dbReference type="ProteomicsDB" id="12838"/>
<dbReference type="ProteomicsDB" id="49125">
    <molecule id="O43707-1"/>
</dbReference>
<dbReference type="Pumba" id="O43707"/>
<dbReference type="Antibodypedia" id="974">
    <property type="antibodies" value="490 antibodies from 44 providers"/>
</dbReference>
<dbReference type="DNASU" id="81"/>
<dbReference type="Ensembl" id="ENST00000252699.7">
    <molecule id="O43707-1"/>
    <property type="protein sequence ID" value="ENSP00000252699.2"/>
    <property type="gene ID" value="ENSG00000130402.14"/>
</dbReference>
<dbReference type="Ensembl" id="ENST00000390009.7">
    <molecule id="O43707-2"/>
    <property type="protein sequence ID" value="ENSP00000439497.1"/>
    <property type="gene ID" value="ENSG00000130402.14"/>
</dbReference>
<dbReference type="Ensembl" id="ENST00000634692.1">
    <molecule id="O43707-2"/>
    <property type="protein sequence ID" value="ENSP00000488962.1"/>
    <property type="gene ID" value="ENSG00000282844.2"/>
</dbReference>
<dbReference type="Ensembl" id="ENST00000634960.2">
    <molecule id="O43707-1"/>
    <property type="protein sequence ID" value="ENSP00000489220.1"/>
    <property type="gene ID" value="ENSG00000282844.2"/>
</dbReference>
<dbReference type="GeneID" id="81"/>
<dbReference type="KEGG" id="hsa:81"/>
<dbReference type="MANE-Select" id="ENST00000252699.7">
    <property type="protein sequence ID" value="ENSP00000252699.2"/>
    <property type="RefSeq nucleotide sequence ID" value="NM_004924.6"/>
    <property type="RefSeq protein sequence ID" value="NP_004915.2"/>
</dbReference>
<dbReference type="UCSC" id="uc002oja.3">
    <molecule id="O43707-1"/>
    <property type="organism name" value="human"/>
</dbReference>
<dbReference type="AGR" id="HGNC:166"/>
<dbReference type="CTD" id="81"/>
<dbReference type="DisGeNET" id="81"/>
<dbReference type="GeneCards" id="ACTN4"/>
<dbReference type="HGNC" id="HGNC:166">
    <property type="gene designation" value="ACTN4"/>
</dbReference>
<dbReference type="HPA" id="ENSG00000130402">
    <property type="expression patterns" value="Low tissue specificity"/>
</dbReference>
<dbReference type="MalaCards" id="ACTN4"/>
<dbReference type="MIM" id="603278">
    <property type="type" value="phenotype"/>
</dbReference>
<dbReference type="MIM" id="604638">
    <property type="type" value="gene"/>
</dbReference>
<dbReference type="neXtProt" id="NX_O43707"/>
<dbReference type="OpenTargets" id="ENSG00000130402"/>
<dbReference type="Orphanet" id="656">
    <property type="disease" value="Hereditary steroid-resistant nephrotic syndrome"/>
</dbReference>
<dbReference type="PharmGKB" id="PA23"/>
<dbReference type="VEuPathDB" id="HostDB:ENSG00000130402"/>
<dbReference type="eggNOG" id="KOG0035">
    <property type="taxonomic scope" value="Eukaryota"/>
</dbReference>
<dbReference type="GeneTree" id="ENSGT00940000159343"/>
<dbReference type="HOGENOM" id="CLU_005217_1_1_1"/>
<dbReference type="InParanoid" id="O43707"/>
<dbReference type="OMA" id="KIADYNH"/>
<dbReference type="OrthoDB" id="10017054at2759"/>
<dbReference type="PAN-GO" id="O43707">
    <property type="GO annotations" value="9 GO annotations based on evolutionary models"/>
</dbReference>
<dbReference type="PhylomeDB" id="O43707"/>
<dbReference type="TreeFam" id="TF352676"/>
<dbReference type="PathwayCommons" id="O43707"/>
<dbReference type="Reactome" id="R-HSA-114608">
    <property type="pathway name" value="Platelet degranulation"/>
</dbReference>
<dbReference type="Reactome" id="R-HSA-373753">
    <property type="pathway name" value="Nephrin family interactions"/>
</dbReference>
<dbReference type="SignaLink" id="O43707"/>
<dbReference type="SIGNOR" id="O43707"/>
<dbReference type="BioGRID-ORCS" id="81">
    <property type="hits" value="24 hits in 1168 CRISPR screens"/>
</dbReference>
<dbReference type="CD-CODE" id="F85A2E29">
    <property type="entry name" value="IMP1 RNP granule"/>
</dbReference>
<dbReference type="CD-CODE" id="FB4E32DD">
    <property type="entry name" value="Presynaptic clusters and postsynaptic densities"/>
</dbReference>
<dbReference type="ChiTaRS" id="ACTN4">
    <property type="organism name" value="human"/>
</dbReference>
<dbReference type="EvolutionaryTrace" id="O43707"/>
<dbReference type="GeneWiki" id="Actinin_alpha_4"/>
<dbReference type="GenomeRNAi" id="81"/>
<dbReference type="Pharos" id="O43707">
    <property type="development level" value="Tbio"/>
</dbReference>
<dbReference type="PRO" id="PR:O43707"/>
<dbReference type="Proteomes" id="UP000005640">
    <property type="component" value="Chromosome 19"/>
</dbReference>
<dbReference type="RNAct" id="O43707">
    <property type="molecule type" value="protein"/>
</dbReference>
<dbReference type="Bgee" id="ENSG00000130402">
    <property type="expression patterns" value="Expressed in popliteal artery and 101 other cell types or tissues"/>
</dbReference>
<dbReference type="ExpressionAtlas" id="O43707">
    <property type="expression patterns" value="baseline and differential"/>
</dbReference>
<dbReference type="GO" id="GO:0015629">
    <property type="term" value="C:actin cytoskeleton"/>
    <property type="evidence" value="ECO:0000314"/>
    <property type="project" value="UniProtKB"/>
</dbReference>
<dbReference type="GO" id="GO:0030054">
    <property type="term" value="C:cell junction"/>
    <property type="evidence" value="ECO:0000318"/>
    <property type="project" value="GO_Central"/>
</dbReference>
<dbReference type="GO" id="GO:0042995">
    <property type="term" value="C:cell projection"/>
    <property type="evidence" value="ECO:0000318"/>
    <property type="project" value="GO_Central"/>
</dbReference>
<dbReference type="GO" id="GO:0030864">
    <property type="term" value="C:cortical actin cytoskeleton"/>
    <property type="evidence" value="ECO:0000318"/>
    <property type="project" value="GO_Central"/>
</dbReference>
<dbReference type="GO" id="GO:0005737">
    <property type="term" value="C:cytoplasm"/>
    <property type="evidence" value="ECO:0000314"/>
    <property type="project" value="UniProtKB"/>
</dbReference>
<dbReference type="GO" id="GO:0070062">
    <property type="term" value="C:extracellular exosome"/>
    <property type="evidence" value="ECO:0007005"/>
    <property type="project" value="UniProtKB"/>
</dbReference>
<dbReference type="GO" id="GO:0005576">
    <property type="term" value="C:extracellular region"/>
    <property type="evidence" value="ECO:0000304"/>
    <property type="project" value="Reactome"/>
</dbReference>
<dbReference type="GO" id="GO:0005615">
    <property type="term" value="C:extracellular space"/>
    <property type="evidence" value="ECO:0007005"/>
    <property type="project" value="UniProtKB"/>
</dbReference>
<dbReference type="GO" id="GO:0005925">
    <property type="term" value="C:focal adhesion"/>
    <property type="evidence" value="ECO:0007005"/>
    <property type="project" value="UniProtKB"/>
</dbReference>
<dbReference type="GO" id="GO:0005634">
    <property type="term" value="C:nucleus"/>
    <property type="evidence" value="ECO:0000314"/>
    <property type="project" value="UniProtKB"/>
</dbReference>
<dbReference type="GO" id="GO:0048471">
    <property type="term" value="C:perinuclear region of cytoplasm"/>
    <property type="evidence" value="ECO:0000314"/>
    <property type="project" value="UniProtKB"/>
</dbReference>
<dbReference type="GO" id="GO:0005886">
    <property type="term" value="C:plasma membrane"/>
    <property type="evidence" value="ECO:0000318"/>
    <property type="project" value="GO_Central"/>
</dbReference>
<dbReference type="GO" id="GO:0031093">
    <property type="term" value="C:platelet alpha granule lumen"/>
    <property type="evidence" value="ECO:0000304"/>
    <property type="project" value="Reactome"/>
</dbReference>
<dbReference type="GO" id="GO:0098871">
    <property type="term" value="C:postsynaptic actin cytoskeleton"/>
    <property type="evidence" value="ECO:0000314"/>
    <property type="project" value="SynGO"/>
</dbReference>
<dbReference type="GO" id="GO:0032991">
    <property type="term" value="C:protein-containing complex"/>
    <property type="evidence" value="ECO:0000314"/>
    <property type="project" value="UniProtKB"/>
</dbReference>
<dbReference type="GO" id="GO:0031143">
    <property type="term" value="C:pseudopodium"/>
    <property type="evidence" value="ECO:0000304"/>
    <property type="project" value="UniProtKB"/>
</dbReference>
<dbReference type="GO" id="GO:1990904">
    <property type="term" value="C:ribonucleoprotein complex"/>
    <property type="evidence" value="ECO:0000314"/>
    <property type="project" value="UniProtKB"/>
</dbReference>
<dbReference type="GO" id="GO:0001725">
    <property type="term" value="C:stress fiber"/>
    <property type="evidence" value="ECO:0007669"/>
    <property type="project" value="UniProtKB-SubCell"/>
</dbReference>
<dbReference type="GO" id="GO:0030018">
    <property type="term" value="C:Z disc"/>
    <property type="evidence" value="ECO:0000318"/>
    <property type="project" value="GO_Central"/>
</dbReference>
<dbReference type="GO" id="GO:0003779">
    <property type="term" value="F:actin binding"/>
    <property type="evidence" value="ECO:0000304"/>
    <property type="project" value="UniProtKB"/>
</dbReference>
<dbReference type="GO" id="GO:0051015">
    <property type="term" value="F:actin filament binding"/>
    <property type="evidence" value="ECO:0000314"/>
    <property type="project" value="UniProtKB"/>
</dbReference>
<dbReference type="GO" id="GO:0005509">
    <property type="term" value="F:calcium ion binding"/>
    <property type="evidence" value="ECO:0007669"/>
    <property type="project" value="InterPro"/>
</dbReference>
<dbReference type="GO" id="GO:0031490">
    <property type="term" value="F:chromatin DNA binding"/>
    <property type="evidence" value="ECO:0000314"/>
    <property type="project" value="UniProtKB"/>
</dbReference>
<dbReference type="GO" id="GO:0005178">
    <property type="term" value="F:integrin binding"/>
    <property type="evidence" value="ECO:0000304"/>
    <property type="project" value="UniProtKB"/>
</dbReference>
<dbReference type="GO" id="GO:0016922">
    <property type="term" value="F:nuclear receptor binding"/>
    <property type="evidence" value="ECO:0000353"/>
    <property type="project" value="UniProtKB"/>
</dbReference>
<dbReference type="GO" id="GO:0042974">
    <property type="term" value="F:nuclear retinoic acid receptor binding"/>
    <property type="evidence" value="ECO:0000353"/>
    <property type="project" value="UniProtKB"/>
</dbReference>
<dbReference type="GO" id="GO:0001882">
    <property type="term" value="F:nucleoside binding"/>
    <property type="evidence" value="ECO:0000314"/>
    <property type="project" value="UniProtKB"/>
</dbReference>
<dbReference type="GO" id="GO:0042803">
    <property type="term" value="F:protein homodimerization activity"/>
    <property type="evidence" value="ECO:0000353"/>
    <property type="project" value="UniProtKB"/>
</dbReference>
<dbReference type="GO" id="GO:0003723">
    <property type="term" value="F:RNA binding"/>
    <property type="evidence" value="ECO:0007005"/>
    <property type="project" value="UniProtKB"/>
</dbReference>
<dbReference type="GO" id="GO:0000977">
    <property type="term" value="F:RNA polymerase II transcription regulatory region sequence-specific DNA binding"/>
    <property type="evidence" value="ECO:0000314"/>
    <property type="project" value="UniProtKB"/>
</dbReference>
<dbReference type="GO" id="GO:0003713">
    <property type="term" value="F:transcription coactivator activity"/>
    <property type="evidence" value="ECO:0000315"/>
    <property type="project" value="UniProtKB"/>
</dbReference>
<dbReference type="GO" id="GO:0044325">
    <property type="term" value="F:transmembrane transporter binding"/>
    <property type="evidence" value="ECO:0000353"/>
    <property type="project" value="UniProtKB"/>
</dbReference>
<dbReference type="GO" id="GO:0030036">
    <property type="term" value="P:actin cytoskeleton organization"/>
    <property type="evidence" value="ECO:0000318"/>
    <property type="project" value="GO_Central"/>
</dbReference>
<dbReference type="GO" id="GO:0055001">
    <property type="term" value="P:muscle cell development"/>
    <property type="evidence" value="ECO:0000318"/>
    <property type="project" value="GO_Central"/>
</dbReference>
<dbReference type="GO" id="GO:1900025">
    <property type="term" value="P:negative regulation of substrate adhesion-dependent cell spreading"/>
    <property type="evidence" value="ECO:0000315"/>
    <property type="project" value="UniProtKB"/>
</dbReference>
<dbReference type="GO" id="GO:0035357">
    <property type="term" value="P:peroxisome proliferator activated receptor signaling pathway"/>
    <property type="evidence" value="ECO:0000314"/>
    <property type="project" value="UniProtKB"/>
</dbReference>
<dbReference type="GO" id="GO:0030335">
    <property type="term" value="P:positive regulation of cell migration"/>
    <property type="evidence" value="ECO:0000315"/>
    <property type="project" value="UniProtKB"/>
</dbReference>
<dbReference type="GO" id="GO:1901224">
    <property type="term" value="P:positive regulation of non-canonical NF-kappaB signal transduction"/>
    <property type="evidence" value="ECO:0000315"/>
    <property type="project" value="UniProtKB"/>
</dbReference>
<dbReference type="GO" id="GO:0032417">
    <property type="term" value="P:positive regulation of sodium:proton antiporter activity"/>
    <property type="evidence" value="ECO:0000303"/>
    <property type="project" value="UniProtKB"/>
</dbReference>
<dbReference type="GO" id="GO:0045944">
    <property type="term" value="P:positive regulation of transcription by RNA polymerase II"/>
    <property type="evidence" value="ECO:0000315"/>
    <property type="project" value="UniProtKB"/>
</dbReference>
<dbReference type="GO" id="GO:0015031">
    <property type="term" value="P:protein transport"/>
    <property type="evidence" value="ECO:0007669"/>
    <property type="project" value="UniProtKB-KW"/>
</dbReference>
<dbReference type="GO" id="GO:0042981">
    <property type="term" value="P:regulation of apoptotic process"/>
    <property type="evidence" value="ECO:0000303"/>
    <property type="project" value="UniProtKB"/>
</dbReference>
<dbReference type="GO" id="GO:0048384">
    <property type="term" value="P:retinoic acid receptor signaling pathway"/>
    <property type="evidence" value="ECO:0000314"/>
    <property type="project" value="UniProtKB"/>
</dbReference>
<dbReference type="GO" id="GO:0033209">
    <property type="term" value="P:tumor necrosis factor-mediated signaling pathway"/>
    <property type="evidence" value="ECO:0000314"/>
    <property type="project" value="UniProtKB"/>
</dbReference>
<dbReference type="GO" id="GO:0030050">
    <property type="term" value="P:vesicle transport along actin filament"/>
    <property type="evidence" value="ECO:0000315"/>
    <property type="project" value="UniProtKB"/>
</dbReference>
<dbReference type="CDD" id="cd21214">
    <property type="entry name" value="CH_ACTN_rpt1"/>
    <property type="match status" value="1"/>
</dbReference>
<dbReference type="CDD" id="cd21216">
    <property type="entry name" value="CH_ACTN_rpt2"/>
    <property type="match status" value="1"/>
</dbReference>
<dbReference type="CDD" id="cd00051">
    <property type="entry name" value="EFh"/>
    <property type="match status" value="1"/>
</dbReference>
<dbReference type="CDD" id="cd00176">
    <property type="entry name" value="SPEC"/>
    <property type="match status" value="3"/>
</dbReference>
<dbReference type="FunFam" id="1.10.238.10:FF:000004">
    <property type="entry name" value="Actinin alpha 1"/>
    <property type="match status" value="1"/>
</dbReference>
<dbReference type="FunFam" id="1.10.418.10:FF:000001">
    <property type="entry name" value="Actinin alpha 1"/>
    <property type="match status" value="1"/>
</dbReference>
<dbReference type="FunFam" id="1.20.58.60:FF:000004">
    <property type="entry name" value="Actinin alpha 1"/>
    <property type="match status" value="1"/>
</dbReference>
<dbReference type="FunFam" id="1.20.58.60:FF:000005">
    <property type="entry name" value="Actinin alpha 1"/>
    <property type="match status" value="1"/>
</dbReference>
<dbReference type="FunFam" id="1.10.238.10:FF:000156">
    <property type="entry name" value="Actinin alpha 4"/>
    <property type="match status" value="1"/>
</dbReference>
<dbReference type="FunFam" id="1.10.418.10:FF:000005">
    <property type="entry name" value="Actinin alpha 4"/>
    <property type="match status" value="1"/>
</dbReference>
<dbReference type="FunFam" id="1.20.58.60:FF:000002">
    <property type="entry name" value="Actinin, alpha 1"/>
    <property type="match status" value="1"/>
</dbReference>
<dbReference type="FunFam" id="1.20.58.60:FF:000003">
    <property type="entry name" value="Actinin, alpha 1"/>
    <property type="match status" value="1"/>
</dbReference>
<dbReference type="Gene3D" id="1.20.58.60">
    <property type="match status" value="4"/>
</dbReference>
<dbReference type="Gene3D" id="1.10.418.10">
    <property type="entry name" value="Calponin-like domain"/>
    <property type="match status" value="2"/>
</dbReference>
<dbReference type="Gene3D" id="1.10.238.10">
    <property type="entry name" value="EF-hand"/>
    <property type="match status" value="2"/>
</dbReference>
<dbReference type="IDEAL" id="IID00129"/>
<dbReference type="InterPro" id="IPR001589">
    <property type="entry name" value="Actinin_actin-bd_CS"/>
</dbReference>
<dbReference type="InterPro" id="IPR001715">
    <property type="entry name" value="CH_dom"/>
</dbReference>
<dbReference type="InterPro" id="IPR036872">
    <property type="entry name" value="CH_dom_sf"/>
</dbReference>
<dbReference type="InterPro" id="IPR011992">
    <property type="entry name" value="EF-hand-dom_pair"/>
</dbReference>
<dbReference type="InterPro" id="IPR014837">
    <property type="entry name" value="EF-hand_Ca_insen"/>
</dbReference>
<dbReference type="InterPro" id="IPR018247">
    <property type="entry name" value="EF_Hand_1_Ca_BS"/>
</dbReference>
<dbReference type="InterPro" id="IPR002048">
    <property type="entry name" value="EF_hand_dom"/>
</dbReference>
<dbReference type="InterPro" id="IPR018159">
    <property type="entry name" value="Spectrin/alpha-actinin"/>
</dbReference>
<dbReference type="InterPro" id="IPR002017">
    <property type="entry name" value="Spectrin_repeat"/>
</dbReference>
<dbReference type="PANTHER" id="PTHR11915">
    <property type="entry name" value="SPECTRIN/FILAMIN RELATED CYTOSKELETAL PROTEIN"/>
    <property type="match status" value="1"/>
</dbReference>
<dbReference type="Pfam" id="PF00307">
    <property type="entry name" value="CH"/>
    <property type="match status" value="2"/>
</dbReference>
<dbReference type="Pfam" id="PF08726">
    <property type="entry name" value="EFhand_Ca_insen"/>
    <property type="match status" value="1"/>
</dbReference>
<dbReference type="Pfam" id="PF00435">
    <property type="entry name" value="Spectrin"/>
    <property type="match status" value="4"/>
</dbReference>
<dbReference type="SMART" id="SM00033">
    <property type="entry name" value="CH"/>
    <property type="match status" value="2"/>
</dbReference>
<dbReference type="SMART" id="SM00054">
    <property type="entry name" value="EFh"/>
    <property type="match status" value="2"/>
</dbReference>
<dbReference type="SMART" id="SM01184">
    <property type="entry name" value="efhand_Ca_insen"/>
    <property type="match status" value="1"/>
</dbReference>
<dbReference type="SMART" id="SM00150">
    <property type="entry name" value="SPEC"/>
    <property type="match status" value="4"/>
</dbReference>
<dbReference type="SUPFAM" id="SSF47576">
    <property type="entry name" value="Calponin-homology domain, CH-domain"/>
    <property type="match status" value="1"/>
</dbReference>
<dbReference type="SUPFAM" id="SSF47473">
    <property type="entry name" value="EF-hand"/>
    <property type="match status" value="1"/>
</dbReference>
<dbReference type="SUPFAM" id="SSF46966">
    <property type="entry name" value="Spectrin repeat"/>
    <property type="match status" value="4"/>
</dbReference>
<dbReference type="PROSITE" id="PS00019">
    <property type="entry name" value="ACTININ_1"/>
    <property type="match status" value="1"/>
</dbReference>
<dbReference type="PROSITE" id="PS00020">
    <property type="entry name" value="ACTININ_2"/>
    <property type="match status" value="1"/>
</dbReference>
<dbReference type="PROSITE" id="PS50021">
    <property type="entry name" value="CH"/>
    <property type="match status" value="2"/>
</dbReference>
<dbReference type="PROSITE" id="PS00018">
    <property type="entry name" value="EF_HAND_1"/>
    <property type="match status" value="1"/>
</dbReference>
<dbReference type="PROSITE" id="PS50222">
    <property type="entry name" value="EF_HAND_2"/>
    <property type="match status" value="2"/>
</dbReference>
<name>ACTN4_HUMAN</name>
<organism>
    <name type="scientific">Homo sapiens</name>
    <name type="common">Human</name>
    <dbReference type="NCBI Taxonomy" id="9606"/>
    <lineage>
        <taxon>Eukaryota</taxon>
        <taxon>Metazoa</taxon>
        <taxon>Chordata</taxon>
        <taxon>Craniata</taxon>
        <taxon>Vertebrata</taxon>
        <taxon>Euteleostomi</taxon>
        <taxon>Mammalia</taxon>
        <taxon>Eutheria</taxon>
        <taxon>Euarchontoglires</taxon>
        <taxon>Primates</taxon>
        <taxon>Haplorrhini</taxon>
        <taxon>Catarrhini</taxon>
        <taxon>Hominidae</taxon>
        <taxon>Homo</taxon>
    </lineage>
</organism>
<feature type="chain" id="PRO_0000073440" description="Alpha-actinin-4">
    <location>
        <begin position="1"/>
        <end position="911"/>
    </location>
</feature>
<feature type="domain" description="Calponin-homology (CH) 1" evidence="6">
    <location>
        <begin position="50"/>
        <end position="154"/>
    </location>
</feature>
<feature type="domain" description="Calponin-homology (CH) 2" evidence="6">
    <location>
        <begin position="163"/>
        <end position="269"/>
    </location>
</feature>
<feature type="repeat" description="Spectrin 1" evidence="5">
    <location>
        <begin position="293"/>
        <end position="403"/>
    </location>
</feature>
<feature type="repeat" description="Spectrin 2" evidence="5">
    <location>
        <begin position="413"/>
        <end position="518"/>
    </location>
</feature>
<feature type="repeat" description="Spectrin 3" evidence="5">
    <location>
        <begin position="528"/>
        <end position="639"/>
    </location>
</feature>
<feature type="repeat" description="Spectrin 4" evidence="5">
    <location>
        <begin position="649"/>
        <end position="752"/>
    </location>
</feature>
<feature type="domain" description="EF-hand 1" evidence="7">
    <location>
        <begin position="765"/>
        <end position="800"/>
    </location>
</feature>
<feature type="domain" description="EF-hand 2" evidence="7">
    <location>
        <begin position="806"/>
        <end position="841"/>
    </location>
</feature>
<feature type="region of interest" description="Actin-binding">
    <location>
        <begin position="1"/>
        <end position="269"/>
    </location>
</feature>
<feature type="region of interest" description="Interaction with VCL" evidence="11 29">
    <location>
        <begin position="12"/>
        <end position="26"/>
    </location>
</feature>
<feature type="region of interest" description="Interaction with VCL" evidence="11 29">
    <location>
        <begin position="40"/>
        <end position="61"/>
    </location>
</feature>
<feature type="region of interest" description="Interaction with VCL" evidence="11 29">
    <location>
        <begin position="108"/>
        <end position="126"/>
    </location>
</feature>
<feature type="region of interest" description="Polyphosphoinositide (PIP2)-binding" evidence="5">
    <location>
        <begin position="177"/>
        <end position="192"/>
    </location>
</feature>
<feature type="region of interest" description="Mediates interaction with MICALL2" evidence="2">
    <location>
        <begin position="736"/>
        <end position="911"/>
    </location>
</feature>
<feature type="short sequence motif" description="LXXLL motif" evidence="15">
    <location>
        <begin position="84"/>
        <end position="88"/>
    </location>
</feature>
<feature type="binding site" evidence="7">
    <location>
        <position position="778"/>
    </location>
    <ligand>
        <name>Ca(2+)</name>
        <dbReference type="ChEBI" id="CHEBI:29108"/>
    </ligand>
</feature>
<feature type="binding site" evidence="7">
    <location>
        <position position="780"/>
    </location>
    <ligand>
        <name>Ca(2+)</name>
        <dbReference type="ChEBI" id="CHEBI:29108"/>
    </ligand>
</feature>
<feature type="binding site" evidence="7">
    <location>
        <position position="789"/>
    </location>
    <ligand>
        <name>Ca(2+)</name>
        <dbReference type="ChEBI" id="CHEBI:29108"/>
    </ligand>
</feature>
<feature type="modified residue" description="Phosphotyrosine" evidence="1">
    <location>
        <position position="31"/>
    </location>
</feature>
<feature type="modified residue" description="N6-acetyllysine" evidence="30">
    <location>
        <position position="114"/>
    </location>
</feature>
<feature type="modified residue" description="N6-acetyllysine" evidence="1">
    <location>
        <position position="214"/>
    </location>
</feature>
<feature type="modified residue" description="Phosphothreonine" evidence="31">
    <location>
        <position position="249"/>
    </location>
</feature>
<feature type="modified residue" description="N6-acetyllysine" evidence="30">
    <location>
        <position position="592"/>
    </location>
</feature>
<feature type="modified residue" description="N6-acetyllysine" evidence="30">
    <location>
        <position position="625"/>
    </location>
</feature>
<feature type="modified residue" description="Phosphoserine" evidence="1">
    <location>
        <position position="696"/>
    </location>
</feature>
<feature type="modified residue" description="N6-acetyllysine" evidence="2">
    <location>
        <position position="779"/>
    </location>
</feature>
<feature type="modified residue" description="N6-acetyllysine" evidence="2">
    <location>
        <position position="859"/>
    </location>
</feature>
<feature type="modified residue" description="Phosphoserine" evidence="4">
    <location>
        <position position="909"/>
    </location>
</feature>
<feature type="splice variant" id="VSP_047733" description="In isoform ACTN4ISO." evidence="24">
    <location>
        <begin position="54"/>
        <end position="272"/>
    </location>
</feature>
<feature type="splice variant" id="VSP_053401" description="In isoform 3." evidence="25">
    <location>
        <begin position="89"/>
        <end position="478"/>
    </location>
</feature>
<feature type="sequence variant" id="VAR_079797" description="In FSGS1." evidence="19">
    <original>W</original>
    <variation>R</variation>
    <location>
        <position position="59"/>
    </location>
</feature>
<feature type="sequence variant" id="VAR_079798" description="In FSGS1." evidence="19">
    <original>E</original>
    <variation>Q</variation>
    <location>
        <position position="72"/>
    </location>
</feature>
<feature type="sequence variant" id="VAR_079799" description="In FSGS1; uncertain significance." evidence="19">
    <original>F</original>
    <variation>L</variation>
    <location>
        <position position="153"/>
    </location>
</feature>
<feature type="sequence variant" id="VAR_010378" description="In FSGS1; no effect on protein abundance; no effect on homodimerization; loss of localization to the nucleus; prevents nuclear localization of the wild-type protein; decreased interaction with PPARG and RARA; loss of transcriptional coactivator activity; dominant negative effect on nuclear receptors-mediated transcription; increased actin-binding affinity; dbSNP:rs121908415." evidence="8 13 15 19">
    <original>K</original>
    <variation>E</variation>
    <location>
        <position position="255"/>
    </location>
</feature>
<feature type="sequence variant" id="VAR_010379" description="In FSGS1; no effect on protein abundance; no effect on homodimerization; loss of localization to the nucleus; prevents nuclear localization of the wild-type protein; decreased interaction with PPARG and RARA; loss of transcriptional coactivator activity; dominant negative effect on nuclear receptors-mediated transcription; increased actin-binding affinity; dbSNP:rs121908416." evidence="8 13 15 19">
    <original>T</original>
    <variation>I</variation>
    <location>
        <position position="259"/>
    </location>
</feature>
<feature type="sequence variant" id="VAR_072115" description="In FSGS1." evidence="14">
    <original>S</original>
    <variation>F</variation>
    <location>
        <position position="262"/>
    </location>
</feature>
<feature type="sequence variant" id="VAR_010380" description="In FSGS1; no effect on protein abundance; no effect on homodimerization; loss of localization to the nucleus; prevents nuclear localization of the wild-type protein; decreased interaction with PPARG and RARA; loss of transcriptional coactivator activity; dominant negative effect on nuclear receptors-mediated transcription; increased actin-binding affinity; dbSNP:rs121908417." evidence="8 13 15 19">
    <original>S</original>
    <variation>P</variation>
    <location>
        <position position="262"/>
    </location>
</feature>
<feature type="sequence variant" id="VAR_079800" description="In FSGS1; uncertain significance; dbSNP:rs112545413." evidence="18">
    <original>R</original>
    <variation>Q</variation>
    <location>
        <position position="310"/>
    </location>
</feature>
<feature type="sequence variant" id="VAR_072116" description="In FSGS1; dbSNP:rs201128110." evidence="20">
    <original>A</original>
    <variation>T</variation>
    <location>
        <position position="427"/>
    </location>
</feature>
<feature type="sequence variant" id="VAR_072117" description="In FSGS1." evidence="20">
    <original>N</original>
    <variation>D</variation>
    <location>
        <position position="748"/>
    </location>
</feature>
<feature type="sequence variant" id="VAR_072118" description="Found in patients with IgA nephropathy; uncertain significance; dbSNP:rs771421233." evidence="20">
    <original>A</original>
    <variation>V</variation>
    <location>
        <position position="784"/>
    </location>
</feature>
<feature type="sequence variant" id="VAR_072119" evidence="20">
    <original>G</original>
    <variation>R</variation>
    <location>
        <position position="786"/>
    </location>
</feature>
<feature type="sequence variant" id="VAR_072120" evidence="20">
    <original>P</original>
    <variation>L</variation>
    <location>
        <position position="787"/>
    </location>
</feature>
<feature type="sequence variant" id="VAR_072121" evidence="20">
    <original>P</original>
    <variation>S</variation>
    <location>
        <position position="787"/>
    </location>
</feature>
<feature type="sequence variant" id="VAR_072122" description="Found in patients with IgA nephropathy; uncertain significance." evidence="20">
    <original>C</original>
    <variation>Y</variation>
    <location>
        <position position="793"/>
    </location>
</feature>
<feature type="sequence variant" id="VAR_072123" description="Found in patients with IgA nephropathy; uncertain significance." evidence="20">
    <original>G</original>
    <variation>D</variation>
    <location>
        <position position="798"/>
    </location>
</feature>
<feature type="sequence variant" id="VAR_072124" description="In dbSNP:rs141727248." evidence="20">
    <original>V</original>
    <variation>M</variation>
    <location>
        <position position="801"/>
    </location>
</feature>
<feature type="mutagenesis site" description="Reduced interaction with RARA. Loss of the transcriptional coac tivator activity toward RARA." evidence="15">
    <original>LL</original>
    <variation>AA</variation>
    <location>
        <begin position="87"/>
        <end position="88"/>
    </location>
</feature>
<feature type="sequence conflict" description="In Ref. 1; AAC17470." evidence="26" ref="1">
    <original>C</original>
    <variation>S</variation>
    <location>
        <position position="60"/>
    </location>
</feature>
<feature type="sequence conflict" description="In Ref. 6; AL047603." evidence="26" ref="6">
    <original>S</original>
    <variation>L</variation>
    <location>
        <position position="164"/>
    </location>
</feature>
<feature type="sequence conflict" description="In Ref. 7; AU118403." evidence="26" ref="7">
    <original>V</original>
    <variation>F</variation>
    <location>
        <position position="221"/>
    </location>
</feature>
<feature type="sequence conflict" description="In Ref. 1; AAC17470." evidence="26" ref="1">
    <original>T</original>
    <variation>TET</variation>
    <location>
        <position position="276"/>
    </location>
</feature>
<feature type="sequence conflict" description="In Ref. 1; AAC17470." evidence="26" ref="1">
    <original>EHL</original>
    <variation>CSTS</variation>
    <location>
        <begin position="292"/>
        <end position="294"/>
    </location>
</feature>
<feature type="sequence conflict" description="In Ref. 1; AAC17470." evidence="26" ref="1">
    <original>TL</original>
    <variation>SV</variation>
    <location>
        <begin position="359"/>
        <end position="360"/>
    </location>
</feature>
<feature type="sequence conflict" description="In Ref. 1; AAC17470." evidence="26" ref="1">
    <original>I</original>
    <variation>S</variation>
    <location>
        <position position="476"/>
    </location>
</feature>
<feature type="sequence conflict" description="In Ref. 1; AAC17470." evidence="26" ref="1">
    <original>I</original>
    <variation>II</variation>
    <location>
        <position position="526"/>
    </location>
</feature>
<feature type="sequence conflict" description="In Ref. 1; AAC17470." evidence="26" ref="1">
    <original>R</original>
    <variation>P</variation>
    <location>
        <position position="536"/>
    </location>
</feature>
<feature type="sequence conflict" description="In Ref. 1; AAC17470." evidence="26" ref="1">
    <original>Q</original>
    <variation>QQ</variation>
    <location>
        <position position="645"/>
    </location>
</feature>
<feature type="sequence conflict" description="In Ref. 1; AAC17470." evidence="26" ref="1">
    <original>GR</original>
    <variation>A</variation>
    <location>
        <begin position="673"/>
        <end position="674"/>
    </location>
</feature>
<feature type="sequence conflict" description="In Ref. 1; AAC17470." evidence="26" ref="1">
    <original>A</original>
    <variation>T</variation>
    <location>
        <position position="850"/>
    </location>
</feature>
<feature type="sequence conflict" description="In Ref. 1; AAC17470." evidence="26" ref="1">
    <original>AVP</original>
    <variation>GVR</variation>
    <location>
        <begin position="891"/>
        <end position="893"/>
    </location>
</feature>
<feature type="helix" evidence="35">
    <location>
        <begin position="47"/>
        <end position="64"/>
    </location>
</feature>
<feature type="helix" evidence="35">
    <location>
        <begin position="65"/>
        <end position="67"/>
    </location>
</feature>
<feature type="turn" evidence="35">
    <location>
        <begin position="74"/>
        <end position="80"/>
    </location>
</feature>
<feature type="helix" evidence="35">
    <location>
        <begin position="82"/>
        <end position="92"/>
    </location>
</feature>
<feature type="helix" evidence="35">
    <location>
        <begin position="105"/>
        <end position="121"/>
    </location>
</feature>
<feature type="helix" evidence="35">
    <location>
        <begin position="131"/>
        <end position="136"/>
    </location>
</feature>
<feature type="helix" evidence="35">
    <location>
        <begin position="139"/>
        <end position="154"/>
    </location>
</feature>
<feature type="turn" evidence="35">
    <location>
        <begin position="155"/>
        <end position="157"/>
    </location>
</feature>
<feature type="helix" evidence="35">
    <location>
        <begin position="165"/>
        <end position="177"/>
    </location>
</feature>
<feature type="strand" evidence="35">
    <location>
        <begin position="187"/>
        <end position="189"/>
    </location>
</feature>
<feature type="helix" evidence="35">
    <location>
        <begin position="190"/>
        <end position="192"/>
    </location>
</feature>
<feature type="helix" evidence="35">
    <location>
        <begin position="196"/>
        <end position="205"/>
    </location>
</feature>
<feature type="helix" evidence="35">
    <location>
        <begin position="207"/>
        <end position="209"/>
    </location>
</feature>
<feature type="helix" evidence="35">
    <location>
        <begin position="212"/>
        <end position="214"/>
    </location>
</feature>
<feature type="helix" evidence="35">
    <location>
        <begin position="220"/>
        <end position="234"/>
    </location>
</feature>
<feature type="helix" evidence="35">
    <location>
        <begin position="243"/>
        <end position="248"/>
    </location>
</feature>
<feature type="strand" evidence="34">
    <location>
        <begin position="249"/>
        <end position="251"/>
    </location>
</feature>
<feature type="helix" evidence="35">
    <location>
        <begin position="254"/>
        <end position="268"/>
    </location>
</feature>
<feature type="helix" evidence="32">
    <location>
        <begin position="519"/>
        <end position="552"/>
    </location>
</feature>
<feature type="helix" evidence="32">
    <location>
        <begin position="560"/>
        <end position="600"/>
    </location>
</feature>
<feature type="strand" evidence="32">
    <location>
        <begin position="606"/>
        <end position="608"/>
    </location>
</feature>
<feature type="helix" evidence="32">
    <location>
        <begin position="616"/>
        <end position="641"/>
    </location>
</feature>
<feature type="helix" evidence="33">
    <location>
        <begin position="736"/>
        <end position="756"/>
    </location>
</feature>
<comment type="function">
    <text evidence="2 10 15 17 27">F-actin cross-linking protein which is thought to anchor actin to a variety of intracellular structures. This is a bundling protein (Probable). Probably involved in vesicular trafficking via its association with the CART complex. The CART complex is necessary for efficient transferrin receptor recycling but not for EGFR degradation (PubMed:15772161). Involved in tight junction assembly in epithelial cells probably through interaction with MICALL2. Links MICALL2 to the actin cytoskeleton and recruits it to the tight junctions (By similarity). May also function as a transcriptional coactivator, stimulating transcription mediated by the nuclear hormone receptors PPARG and RARA (PubMed:22351778). Association with IGSF8 regulates the immune synapse formation and is required for efficient T-cell activation (PubMed:22689882).</text>
</comment>
<comment type="subunit">
    <text evidence="2 3 9 10 11 12 15 17 21">Homodimer; antiparallel. Binds TRIM3 at the N-terminus (PubMed:15772161). Interacts with MICALL2 (preferentially in opened conformation); stimulated by RAB13 activation (By similarity). Identified in a complex with CASK, IQGAP1, MAGI2, NPHS1, SPTAN1 and SPTBN1 (By similarity). Identified in a IGF2BP1-dependent mRNP granule complex containing untranslated mRNAs (PubMed:17289661). Component of the CART complex, at least composed of ACTN4, HGS/HRS, MYO5B and TRIM3 (PubMed:15772161). Interacts with MAGI1 (PubMed:12042308). Interacts with PDLIM2 (By similarity). Interacts with PPARG and RARA (PubMed:22351778). Binds to VCL; this interaction triggers VCL conformational changes (PubMed:15988023). Interacts with SEPTIN14 (PubMed:33228246). Interacts with IGSF8 (PubMed:22689882).</text>
</comment>
<comment type="interaction">
    <interactant intactId="EBI-351526">
        <id>O43707</id>
    </interactant>
    <interactant intactId="EBI-2880652">
        <id>Q08043</id>
        <label>ACTN3</label>
    </interactant>
    <organismsDiffer>false</organismsDiffer>
    <experiments>3</experiments>
</comment>
<comment type="interaction">
    <interactant intactId="EBI-351526">
        <id>O43707</id>
    </interactant>
    <interactant intactId="EBI-10174327">
        <id>A8K571</id>
        <label>BMP7</label>
    </interactant>
    <organismsDiffer>false</organismsDiffer>
    <experiments>3</experiments>
</comment>
<comment type="interaction">
    <interactant intactId="EBI-351526">
        <id>O43707</id>
    </interactant>
    <interactant intactId="EBI-725606">
        <id>Q9NWQ9</id>
        <label>C14orf119</label>
    </interactant>
    <organismsDiffer>false</organismsDiffer>
    <experiments>3</experiments>
</comment>
<comment type="interaction">
    <interactant intactId="EBI-351526">
        <id>O43707</id>
    </interactant>
    <interactant intactId="EBI-491549">
        <id>P35222</id>
        <label>CTNNB1</label>
    </interactant>
    <organismsDiffer>false</organismsDiffer>
    <experiments>7</experiments>
</comment>
<comment type="interaction">
    <interactant intactId="EBI-351526">
        <id>O43707</id>
    </interactant>
    <interactant intactId="EBI-297509">
        <id>P46940</id>
        <label>IQGAP1</label>
    </interactant>
    <organismsDiffer>false</organismsDiffer>
    <experiments>4</experiments>
</comment>
<comment type="interaction">
    <interactant intactId="EBI-351526">
        <id>O43707</id>
    </interactant>
    <interactant intactId="EBI-11023122">
        <id>O60294</id>
        <label>LCMT2</label>
    </interactant>
    <organismsDiffer>false</organismsDiffer>
    <experiments>3</experiments>
</comment>
<comment type="interaction">
    <interactant intactId="EBI-351526">
        <id>O43707</id>
    </interactant>
    <interactant intactId="EBI-739832">
        <id>Q8TBB1</id>
        <label>LNX1</label>
    </interactant>
    <organismsDiffer>false</organismsDiffer>
    <experiments>3</experiments>
</comment>
<comment type="interaction">
    <interactant intactId="EBI-351526">
        <id>O43707</id>
    </interactant>
    <interactant intactId="EBI-748397">
        <id>P50222</id>
        <label>MEOX2</label>
    </interactant>
    <organismsDiffer>false</organismsDiffer>
    <experiments>3</experiments>
</comment>
<comment type="interaction">
    <interactant intactId="EBI-351526">
        <id>O43707</id>
    </interactant>
    <interactant intactId="EBI-2555563">
        <id>Q8IY33</id>
        <label>MICALL2</label>
    </interactant>
    <organismsDiffer>false</organismsDiffer>
    <experiments>3</experiments>
</comment>
<comment type="interaction">
    <interactant intactId="EBI-351526">
        <id>O43707</id>
    </interactant>
    <interactant intactId="EBI-746712">
        <id>Q9NPC6</id>
        <label>MYOZ2</label>
    </interactant>
    <organismsDiffer>false</organismsDiffer>
    <experiments>16</experiments>
</comment>
<comment type="interaction">
    <interactant intactId="EBI-351526">
        <id>O43707</id>
    </interactant>
    <interactant intactId="EBI-724897">
        <id>O00151</id>
        <label>PDLIM1</label>
    </interactant>
    <organismsDiffer>false</organismsDiffer>
    <experiments>6</experiments>
</comment>
<comment type="interaction">
    <interactant intactId="EBI-351526">
        <id>O43707</id>
    </interactant>
    <interactant intactId="EBI-12037893">
        <id>O94875-10</id>
        <label>SORBS2</label>
    </interactant>
    <organismsDiffer>false</organismsDiffer>
    <experiments>4</experiments>
</comment>
<comment type="interaction">
    <interactant intactId="EBI-351526">
        <id>O43707</id>
    </interactant>
    <interactant intactId="EBI-79553">
        <id>Q07157</id>
        <label>TJP1</label>
    </interactant>
    <organismsDiffer>false</organismsDiffer>
    <experiments>4</experiments>
</comment>
<comment type="interaction">
    <interactant intactId="EBI-351526">
        <id>O43707</id>
    </interactant>
    <interactant intactId="EBI-10175581">
        <id>B2R8Y4</id>
    </interactant>
    <organismsDiffer>false</organismsDiffer>
    <experiments>3</experiments>
</comment>
<comment type="interaction">
    <interactant intactId="EBI-351526">
        <id>O43707</id>
    </interactant>
    <interactant intactId="EBI-2547640">
        <id>P03466</id>
        <label>NP</label>
    </interactant>
    <organismsDiffer>true</organismsDiffer>
    <experiments>2</experiments>
</comment>
<comment type="interaction">
    <interactant intactId="EBI-351526">
        <id>O43707</id>
    </interactant>
    <interactant intactId="EBI-9512099">
        <id>Q5L4H4</id>
        <label>NP</label>
    </interactant>
    <organismsDiffer>true</organismsDiffer>
    <experiments>5</experiments>
</comment>
<comment type="interaction">
    <interactant intactId="EBI-15971664">
        <id>O43707-1</id>
    </interactant>
    <interactant intactId="EBI-413374">
        <id>P10276</id>
        <label>RARA</label>
    </interactant>
    <organismsDiffer>false</organismsDiffer>
    <experiments>2</experiments>
</comment>
<comment type="subcellular location">
    <subcellularLocation>
        <location evidence="15 22">Nucleus</location>
    </subcellularLocation>
    <subcellularLocation>
        <location evidence="15 22">Cytoplasm</location>
    </subcellularLocation>
    <subcellularLocation>
        <location evidence="2">Cell junction</location>
    </subcellularLocation>
    <subcellularLocation>
        <location evidence="22">Cytoplasm</location>
        <location evidence="22">Cytoskeleton</location>
        <location evidence="22">Stress fiber</location>
    </subcellularLocation>
    <subcellularLocation>
        <location evidence="2">Cytoplasm</location>
        <location evidence="2">Perinuclear region</location>
    </subcellularLocation>
    <text evidence="2 12 22">Localized in cytoplasmic mRNP granules containing untranslated mRNAs. Expressed in the perinuclear rim and manchette structure in early elongating spermatids during spermiogenesis (By similarity). Nuclear translocation can be induced by the PI3 kinase inhibitor wortmannin or by cytochalasin D. Exclusively localized in the nucleus in a limited number of cell lines (breast cancer cell line MCF-7, oral floor cancer IMC-2, and bladder cancer KU-7).</text>
</comment>
<comment type="alternative products">
    <event type="alternative splicing"/>
    <isoform>
        <id>O43707-1</id>
        <name>1</name>
        <sequence type="displayed"/>
    </isoform>
    <isoform>
        <id>O43707-2</id>
        <name>ACTN4ISO</name>
        <sequence type="described" ref="VSP_047733"/>
    </isoform>
    <isoform>
        <id>O43707-3</id>
        <name>3</name>
        <sequence type="described" ref="VSP_053401"/>
    </isoform>
</comment>
<comment type="tissue specificity">
    <text evidence="22">Widely expressed.</text>
</comment>
<comment type="domain">
    <text evidence="15">Contains one Leu-Xaa-Xaa-Leu-Leu (LXXLL) motif that mediates interaction with nuclear receptors.</text>
</comment>
<comment type="disease" evidence="8 13 14 15 18 19 20">
    <disease id="DI-01620">
        <name>Focal segmental glomerulosclerosis 1</name>
        <acronym>FSGS1</acronym>
        <description>A renal pathology defined by the presence of segmental sclerosis in glomeruli and resulting in proteinuria, reduced glomerular filtration rate and progressive decline in renal function. Renal insufficiency often progresses to end-stage renal disease, a highly morbid state requiring either dialysis therapy or kidney transplantation.</description>
        <dbReference type="MIM" id="603278"/>
    </disease>
    <text>The disease is caused by variants affecting the gene represented in this entry.</text>
</comment>
<comment type="miscellaneous">
    <molecule>Isoform ACTN4ISO</molecule>
    <text evidence="16">Does not colocalize with actin cytoskeleton structures.</text>
</comment>
<comment type="similarity">
    <text evidence="26">Belongs to the alpha-actinin family.</text>
</comment>
<comment type="sequence caution" evidence="26">
    <conflict type="frameshift">
        <sequence resource="EMBL-CDS" id="AAC17470"/>
    </conflict>
</comment>
<comment type="sequence caution" evidence="26">
    <conflict type="erroneous initiation">
        <sequence resource="EMBL-CDS" id="BAA24447"/>
    </conflict>
    <text>Truncated N-terminus.</text>
</comment>